<dbReference type="EMBL" id="AB050466">
    <property type="protein sequence ID" value="BAB17224.1"/>
    <property type="molecule type" value="mRNA"/>
</dbReference>
<dbReference type="SMR" id="Q9DG97"/>
<dbReference type="GO" id="GO:0016538">
    <property type="term" value="F:cyclin-dependent protein serine/threonine kinase regulator activity"/>
    <property type="evidence" value="ECO:0007669"/>
    <property type="project" value="InterPro"/>
</dbReference>
<dbReference type="GO" id="GO:0051301">
    <property type="term" value="P:cell division"/>
    <property type="evidence" value="ECO:0007669"/>
    <property type="project" value="UniProtKB-KW"/>
</dbReference>
<dbReference type="GO" id="GO:0044772">
    <property type="term" value="P:mitotic cell cycle phase transition"/>
    <property type="evidence" value="ECO:0007669"/>
    <property type="project" value="InterPro"/>
</dbReference>
<dbReference type="CDD" id="cd20565">
    <property type="entry name" value="CYCLIN_CCNB1_rpt1"/>
    <property type="match status" value="1"/>
</dbReference>
<dbReference type="FunFam" id="1.10.472.10:FF:000198">
    <property type="entry name" value="G2/mitotic-specific cyclin-B1"/>
    <property type="match status" value="1"/>
</dbReference>
<dbReference type="Gene3D" id="1.10.472.10">
    <property type="entry name" value="Cyclin-like"/>
    <property type="match status" value="2"/>
</dbReference>
<dbReference type="InterPro" id="IPR048026">
    <property type="entry name" value="CCNB1_first_cyclin-box"/>
</dbReference>
<dbReference type="InterPro" id="IPR039361">
    <property type="entry name" value="Cyclin"/>
</dbReference>
<dbReference type="InterPro" id="IPR013763">
    <property type="entry name" value="Cyclin-like_dom"/>
</dbReference>
<dbReference type="InterPro" id="IPR036915">
    <property type="entry name" value="Cyclin-like_sf"/>
</dbReference>
<dbReference type="InterPro" id="IPR046965">
    <property type="entry name" value="Cyclin_A/B-like"/>
</dbReference>
<dbReference type="InterPro" id="IPR004367">
    <property type="entry name" value="Cyclin_C-dom"/>
</dbReference>
<dbReference type="InterPro" id="IPR006671">
    <property type="entry name" value="Cyclin_N"/>
</dbReference>
<dbReference type="InterPro" id="IPR048258">
    <property type="entry name" value="Cyclins_cyclin-box"/>
</dbReference>
<dbReference type="PANTHER" id="PTHR10177">
    <property type="entry name" value="CYCLINS"/>
    <property type="match status" value="1"/>
</dbReference>
<dbReference type="Pfam" id="PF02984">
    <property type="entry name" value="Cyclin_C"/>
    <property type="match status" value="1"/>
</dbReference>
<dbReference type="Pfam" id="PF00134">
    <property type="entry name" value="Cyclin_N"/>
    <property type="match status" value="1"/>
</dbReference>
<dbReference type="PIRSF" id="PIRSF001771">
    <property type="entry name" value="Cyclin_A_B_D_E"/>
    <property type="match status" value="1"/>
</dbReference>
<dbReference type="SMART" id="SM00385">
    <property type="entry name" value="CYCLIN"/>
    <property type="match status" value="2"/>
</dbReference>
<dbReference type="SMART" id="SM01332">
    <property type="entry name" value="Cyclin_C"/>
    <property type="match status" value="1"/>
</dbReference>
<dbReference type="SUPFAM" id="SSF47954">
    <property type="entry name" value="Cyclin-like"/>
    <property type="match status" value="2"/>
</dbReference>
<dbReference type="PROSITE" id="PS00292">
    <property type="entry name" value="CYCLINS"/>
    <property type="match status" value="1"/>
</dbReference>
<name>CCNB1_ORYLU</name>
<accession>Q9DG97</accession>
<evidence type="ECO:0000250" key="1"/>
<evidence type="ECO:0000305" key="2"/>
<gene>
    <name type="primary">ccnb1</name>
</gene>
<organism>
    <name type="scientific">Oryzias luzonensis</name>
    <name type="common">Luzon ricefish</name>
    <dbReference type="NCBI Taxonomy" id="104659"/>
    <lineage>
        <taxon>Eukaryota</taxon>
        <taxon>Metazoa</taxon>
        <taxon>Chordata</taxon>
        <taxon>Craniata</taxon>
        <taxon>Vertebrata</taxon>
        <taxon>Euteleostomi</taxon>
        <taxon>Actinopterygii</taxon>
        <taxon>Neopterygii</taxon>
        <taxon>Teleostei</taxon>
        <taxon>Neoteleostei</taxon>
        <taxon>Acanthomorphata</taxon>
        <taxon>Ovalentaria</taxon>
        <taxon>Atherinomorphae</taxon>
        <taxon>Beloniformes</taxon>
        <taxon>Adrianichthyidae</taxon>
        <taxon>Oryziinae</taxon>
        <taxon>Oryzias</taxon>
    </lineage>
</organism>
<reference key="1">
    <citation type="submission" date="2000-10" db="EMBL/GenBank/DDBJ databases">
        <title>cDNA cloning of Cdc2 and cyclin B in medaka species.</title>
        <authorList>
            <person name="Yamashita M."/>
            <person name="Mita K."/>
        </authorList>
    </citation>
    <scope>NUCLEOTIDE SEQUENCE [MRNA]</scope>
    <source>
        <tissue>Ovary</tissue>
    </source>
</reference>
<comment type="function">
    <text evidence="1">Essential for the control of the cell cycle at the G2/M (mitosis) transition.</text>
</comment>
<comment type="subunit">
    <text evidence="1">Interacts with the CDK1 protein kinase to form a serine/threonine kinase holoenzyme complex also known as maturation promoting factor (MPF). The cyclin subunit imparts substrate specificity to the complex (By similarity).</text>
</comment>
<comment type="developmental stage">
    <text>Accumulates steadily during G2 and is abruptly destroyed at mitosis.</text>
</comment>
<comment type="similarity">
    <text evidence="2">Belongs to the cyclin family. Cyclin AB subfamily.</text>
</comment>
<protein>
    <recommendedName>
        <fullName>G2/mitotic-specific cyclin-B1</fullName>
    </recommendedName>
</protein>
<keyword id="KW-0131">Cell cycle</keyword>
<keyword id="KW-0132">Cell division</keyword>
<keyword id="KW-0195">Cyclin</keyword>
<keyword id="KW-0498">Mitosis</keyword>
<feature type="chain" id="PRO_0000080359" description="G2/mitotic-specific cyclin-B1">
    <location>
        <begin position="1"/>
        <end position="401"/>
    </location>
</feature>
<sequence length="401" mass="44756">MALRVTRNRLASARAELGGKTCSVAGPTQKPRAALGEIGNVAVINKDVTKKNVKTEVAKKTKVPAKAEKIEQPKAAVVPVKPAPEVQVPAQPEPASPTPMETSGCEPADLCQAFSDVILNTAIRDVDADDYNNPLLCSEYVKDIYKYLRQLEVEQSVKPNYLEGQEVTGNMRALLIDWLVQVSLKFRLLQETMYMTVGIIDRFLQDHPVPKKQLQLVGVTAMFLASKYEEMYPPEISDFAYVTDKAYTTAQIRDMEMTILRVLKFQLGRPLPLQFLRRASKIYEVTAEQHTLAKYLLELSMVDYAMDHFPPSMVASAALALTLKVLDAGEWDVTLQHYMAYTADTLTPVMAHIAKNVVKVNNGQTKHMTIKGKYFTSKQMRIATIFQLKSSVVKDLATQIS</sequence>
<proteinExistence type="evidence at transcript level"/>